<keyword id="KW-0488">Methylation</keyword>
<keyword id="KW-1185">Reference proteome</keyword>
<keyword id="KW-0687">Ribonucleoprotein</keyword>
<keyword id="KW-0689">Ribosomal protein</keyword>
<keyword id="KW-0694">RNA-binding</keyword>
<keyword id="KW-0699">rRNA-binding</keyword>
<evidence type="ECO:0000255" key="1">
    <source>
        <dbReference type="HAMAP-Rule" id="MF_00736"/>
    </source>
</evidence>
<evidence type="ECO:0000305" key="2"/>
<organism>
    <name type="scientific">Streptococcus gordonii (strain Challis / ATCC 35105 / BCRC 15272 / CH1 / DL1 / V288)</name>
    <dbReference type="NCBI Taxonomy" id="467705"/>
    <lineage>
        <taxon>Bacteria</taxon>
        <taxon>Bacillati</taxon>
        <taxon>Bacillota</taxon>
        <taxon>Bacilli</taxon>
        <taxon>Lactobacillales</taxon>
        <taxon>Streptococcaceae</taxon>
        <taxon>Streptococcus</taxon>
    </lineage>
</organism>
<proteinExistence type="inferred from homology"/>
<protein>
    <recommendedName>
        <fullName evidence="1">Large ribosomal subunit protein uL11</fullName>
    </recommendedName>
    <alternativeName>
        <fullName evidence="2">50S ribosomal protein L11</fullName>
    </alternativeName>
</protein>
<gene>
    <name evidence="1" type="primary">rplK</name>
    <name type="ordered locus">SGO_1456</name>
</gene>
<comment type="function">
    <text evidence="1">Forms part of the ribosomal stalk which helps the ribosome interact with GTP-bound translation factors.</text>
</comment>
<comment type="subunit">
    <text evidence="1">Part of the ribosomal stalk of the 50S ribosomal subunit. Interacts with L10 and the large rRNA to form the base of the stalk. L10 forms an elongated spine to which L12 dimers bind in a sequential fashion forming a multimeric L10(L12)X complex.</text>
</comment>
<comment type="PTM">
    <text evidence="1">One or more lysine residues are methylated.</text>
</comment>
<comment type="similarity">
    <text evidence="1">Belongs to the universal ribosomal protein uL11 family.</text>
</comment>
<accession>A8AY75</accession>
<reference key="1">
    <citation type="journal article" date="2007" name="J. Bacteriol.">
        <title>Genome-wide transcriptional changes in Streptococcus gordonii in response to competence signaling peptide.</title>
        <authorList>
            <person name="Vickerman M.M."/>
            <person name="Iobst S."/>
            <person name="Jesionowski A.M."/>
            <person name="Gill S.R."/>
        </authorList>
    </citation>
    <scope>NUCLEOTIDE SEQUENCE [LARGE SCALE GENOMIC DNA]</scope>
    <source>
        <strain>Challis / ATCC 35105 / BCRC 15272 / CH1 / DL1 / V288</strain>
    </source>
</reference>
<name>RL11_STRGC</name>
<dbReference type="EMBL" id="CP000725">
    <property type="protein sequence ID" value="ABV09299.1"/>
    <property type="molecule type" value="Genomic_DNA"/>
</dbReference>
<dbReference type="RefSeq" id="WP_008809395.1">
    <property type="nucleotide sequence ID" value="NC_009785.1"/>
</dbReference>
<dbReference type="SMR" id="A8AY75"/>
<dbReference type="STRING" id="467705.SGO_1456"/>
<dbReference type="GeneID" id="93787718"/>
<dbReference type="KEGG" id="sgo:SGO_1456"/>
<dbReference type="eggNOG" id="COG0080">
    <property type="taxonomic scope" value="Bacteria"/>
</dbReference>
<dbReference type="HOGENOM" id="CLU_074237_2_1_9"/>
<dbReference type="Proteomes" id="UP000001131">
    <property type="component" value="Chromosome"/>
</dbReference>
<dbReference type="GO" id="GO:0022625">
    <property type="term" value="C:cytosolic large ribosomal subunit"/>
    <property type="evidence" value="ECO:0007669"/>
    <property type="project" value="TreeGrafter"/>
</dbReference>
<dbReference type="GO" id="GO:0070180">
    <property type="term" value="F:large ribosomal subunit rRNA binding"/>
    <property type="evidence" value="ECO:0007669"/>
    <property type="project" value="UniProtKB-UniRule"/>
</dbReference>
<dbReference type="GO" id="GO:0003735">
    <property type="term" value="F:structural constituent of ribosome"/>
    <property type="evidence" value="ECO:0007669"/>
    <property type="project" value="InterPro"/>
</dbReference>
<dbReference type="GO" id="GO:0006412">
    <property type="term" value="P:translation"/>
    <property type="evidence" value="ECO:0007669"/>
    <property type="project" value="UniProtKB-UniRule"/>
</dbReference>
<dbReference type="CDD" id="cd00349">
    <property type="entry name" value="Ribosomal_L11"/>
    <property type="match status" value="1"/>
</dbReference>
<dbReference type="FunFam" id="1.10.10.250:FF:000001">
    <property type="entry name" value="50S ribosomal protein L11"/>
    <property type="match status" value="1"/>
</dbReference>
<dbReference type="FunFam" id="3.30.1550.10:FF:000001">
    <property type="entry name" value="50S ribosomal protein L11"/>
    <property type="match status" value="1"/>
</dbReference>
<dbReference type="Gene3D" id="1.10.10.250">
    <property type="entry name" value="Ribosomal protein L11, C-terminal domain"/>
    <property type="match status" value="1"/>
</dbReference>
<dbReference type="Gene3D" id="3.30.1550.10">
    <property type="entry name" value="Ribosomal protein L11/L12, N-terminal domain"/>
    <property type="match status" value="1"/>
</dbReference>
<dbReference type="HAMAP" id="MF_00736">
    <property type="entry name" value="Ribosomal_uL11"/>
    <property type="match status" value="1"/>
</dbReference>
<dbReference type="InterPro" id="IPR000911">
    <property type="entry name" value="Ribosomal_uL11"/>
</dbReference>
<dbReference type="InterPro" id="IPR006519">
    <property type="entry name" value="Ribosomal_uL11_bac-typ"/>
</dbReference>
<dbReference type="InterPro" id="IPR020783">
    <property type="entry name" value="Ribosomal_uL11_C"/>
</dbReference>
<dbReference type="InterPro" id="IPR036769">
    <property type="entry name" value="Ribosomal_uL11_C_sf"/>
</dbReference>
<dbReference type="InterPro" id="IPR020785">
    <property type="entry name" value="Ribosomal_uL11_CS"/>
</dbReference>
<dbReference type="InterPro" id="IPR020784">
    <property type="entry name" value="Ribosomal_uL11_N"/>
</dbReference>
<dbReference type="InterPro" id="IPR036796">
    <property type="entry name" value="Ribosomal_uL11_N_sf"/>
</dbReference>
<dbReference type="NCBIfam" id="TIGR01632">
    <property type="entry name" value="L11_bact"/>
    <property type="match status" value="1"/>
</dbReference>
<dbReference type="PANTHER" id="PTHR11661">
    <property type="entry name" value="60S RIBOSOMAL PROTEIN L12"/>
    <property type="match status" value="1"/>
</dbReference>
<dbReference type="PANTHER" id="PTHR11661:SF1">
    <property type="entry name" value="LARGE RIBOSOMAL SUBUNIT PROTEIN UL11M"/>
    <property type="match status" value="1"/>
</dbReference>
<dbReference type="Pfam" id="PF00298">
    <property type="entry name" value="Ribosomal_L11"/>
    <property type="match status" value="1"/>
</dbReference>
<dbReference type="Pfam" id="PF03946">
    <property type="entry name" value="Ribosomal_L11_N"/>
    <property type="match status" value="1"/>
</dbReference>
<dbReference type="SMART" id="SM00649">
    <property type="entry name" value="RL11"/>
    <property type="match status" value="1"/>
</dbReference>
<dbReference type="SUPFAM" id="SSF54747">
    <property type="entry name" value="Ribosomal L11/L12e N-terminal domain"/>
    <property type="match status" value="1"/>
</dbReference>
<dbReference type="SUPFAM" id="SSF46906">
    <property type="entry name" value="Ribosomal protein L11, C-terminal domain"/>
    <property type="match status" value="1"/>
</dbReference>
<dbReference type="PROSITE" id="PS00359">
    <property type="entry name" value="RIBOSOMAL_L11"/>
    <property type="match status" value="1"/>
</dbReference>
<feature type="chain" id="PRO_1000083410" description="Large ribosomal subunit protein uL11">
    <location>
        <begin position="1"/>
        <end position="141"/>
    </location>
</feature>
<sequence>MAKKVEKLVKLQIPAGKATPAPPVGPALGQAGINIMGFTKEFNARTADQAGMIIPVVISVYEDKSFTFVTKTPPAAVLLKKAAGVEKGSGTPNKTKVATVTRAQVQQIAETKMPDLNAANIESAMRMIEGTARSMGFTVTD</sequence>